<evidence type="ECO:0000255" key="1">
    <source>
        <dbReference type="HAMAP-Rule" id="MF_01866"/>
    </source>
</evidence>
<accession>B7VL66</accession>
<sequence>MLCSIYKSSKKEGTYLYIPKKDDFSQVPDALMQMFGKPSFVMVIKMDGRKLAQVNIDKVRESLNTDGFFLQVPPPPVNELELHKERKAQQNVQDEE</sequence>
<organism>
    <name type="scientific">Vibrio atlanticus (strain LGP32)</name>
    <name type="common">Vibrio splendidus (strain Mel32)</name>
    <dbReference type="NCBI Taxonomy" id="575788"/>
    <lineage>
        <taxon>Bacteria</taxon>
        <taxon>Pseudomonadati</taxon>
        <taxon>Pseudomonadota</taxon>
        <taxon>Gammaproteobacteria</taxon>
        <taxon>Vibrionales</taxon>
        <taxon>Vibrionaceae</taxon>
        <taxon>Vibrio</taxon>
    </lineage>
</organism>
<proteinExistence type="inferred from homology"/>
<name>Y884_VIBA3</name>
<feature type="chain" id="PRO_0000375399" description="YcgL domain-containing protein VS_0884">
    <location>
        <begin position="1"/>
        <end position="96"/>
    </location>
</feature>
<feature type="domain" description="YcgL" evidence="1">
    <location>
        <begin position="1"/>
        <end position="84"/>
    </location>
</feature>
<dbReference type="EMBL" id="FM954972">
    <property type="protein sequence ID" value="CAV17892.1"/>
    <property type="molecule type" value="Genomic_DNA"/>
</dbReference>
<dbReference type="SMR" id="B7VL66"/>
<dbReference type="STRING" id="575788.VS_0884"/>
<dbReference type="KEGG" id="vsp:VS_0884"/>
<dbReference type="eggNOG" id="COG3100">
    <property type="taxonomic scope" value="Bacteria"/>
</dbReference>
<dbReference type="HOGENOM" id="CLU_155118_1_0_6"/>
<dbReference type="Proteomes" id="UP000009100">
    <property type="component" value="Chromosome 1"/>
</dbReference>
<dbReference type="Gene3D" id="3.10.510.20">
    <property type="entry name" value="YcgL domain"/>
    <property type="match status" value="1"/>
</dbReference>
<dbReference type="HAMAP" id="MF_01866">
    <property type="entry name" value="UPF0745"/>
    <property type="match status" value="1"/>
</dbReference>
<dbReference type="InterPro" id="IPR038068">
    <property type="entry name" value="YcgL-like_sf"/>
</dbReference>
<dbReference type="InterPro" id="IPR027354">
    <property type="entry name" value="YcgL_dom"/>
</dbReference>
<dbReference type="PANTHER" id="PTHR38109">
    <property type="entry name" value="PROTEIN YCGL"/>
    <property type="match status" value="1"/>
</dbReference>
<dbReference type="PANTHER" id="PTHR38109:SF1">
    <property type="entry name" value="PROTEIN YCGL"/>
    <property type="match status" value="1"/>
</dbReference>
<dbReference type="Pfam" id="PF05166">
    <property type="entry name" value="YcgL"/>
    <property type="match status" value="1"/>
</dbReference>
<dbReference type="SUPFAM" id="SSF160191">
    <property type="entry name" value="YcgL-like"/>
    <property type="match status" value="1"/>
</dbReference>
<dbReference type="PROSITE" id="PS51648">
    <property type="entry name" value="YCGL"/>
    <property type="match status" value="1"/>
</dbReference>
<gene>
    <name type="ordered locus">VS_0884</name>
</gene>
<protein>
    <recommendedName>
        <fullName evidence="1">YcgL domain-containing protein VS_0884</fullName>
    </recommendedName>
</protein>
<reference key="1">
    <citation type="submission" date="2009-02" db="EMBL/GenBank/DDBJ databases">
        <title>Vibrio splendidus str. LGP32 complete genome.</title>
        <authorList>
            <person name="Mazel D."/>
            <person name="Le Roux F."/>
        </authorList>
    </citation>
    <scope>NUCLEOTIDE SEQUENCE [LARGE SCALE GENOMIC DNA]</scope>
    <source>
        <strain>LGP32</strain>
    </source>
</reference>